<reference key="1">
    <citation type="submission" date="2006-12" db="EMBL/GenBank/DDBJ databases">
        <title>Complete sequence of chromosome 1 of Paracoccus denitrificans PD1222.</title>
        <authorList>
            <person name="Copeland A."/>
            <person name="Lucas S."/>
            <person name="Lapidus A."/>
            <person name="Barry K."/>
            <person name="Detter J.C."/>
            <person name="Glavina del Rio T."/>
            <person name="Hammon N."/>
            <person name="Israni S."/>
            <person name="Dalin E."/>
            <person name="Tice H."/>
            <person name="Pitluck S."/>
            <person name="Munk A.C."/>
            <person name="Brettin T."/>
            <person name="Bruce D."/>
            <person name="Han C."/>
            <person name="Tapia R."/>
            <person name="Gilna P."/>
            <person name="Schmutz J."/>
            <person name="Larimer F."/>
            <person name="Land M."/>
            <person name="Hauser L."/>
            <person name="Kyrpides N."/>
            <person name="Lykidis A."/>
            <person name="Spiro S."/>
            <person name="Richardson D.J."/>
            <person name="Moir J.W.B."/>
            <person name="Ferguson S.J."/>
            <person name="van Spanning R.J.M."/>
            <person name="Richardson P."/>
        </authorList>
    </citation>
    <scope>NUCLEOTIDE SEQUENCE [LARGE SCALE GENOMIC DNA]</scope>
    <source>
        <strain>Pd 1222</strain>
    </source>
</reference>
<evidence type="ECO:0000255" key="1">
    <source>
        <dbReference type="HAMAP-Rule" id="MF_00006"/>
    </source>
</evidence>
<proteinExistence type="inferred from homology"/>
<protein>
    <recommendedName>
        <fullName evidence="1">Argininosuccinate lyase</fullName>
        <shortName evidence="1">ASAL</shortName>
        <ecNumber evidence="1">4.3.2.1</ecNumber>
    </recommendedName>
    <alternativeName>
        <fullName evidence="1">Arginosuccinase</fullName>
    </alternativeName>
</protein>
<feature type="chain" id="PRO_0000321446" description="Argininosuccinate lyase">
    <location>
        <begin position="1"/>
        <end position="469"/>
    </location>
</feature>
<gene>
    <name evidence="1" type="primary">argH</name>
    <name type="ordered locus">Pden_2022</name>
</gene>
<keyword id="KW-0028">Amino-acid biosynthesis</keyword>
<keyword id="KW-0055">Arginine biosynthesis</keyword>
<keyword id="KW-0963">Cytoplasm</keyword>
<keyword id="KW-0456">Lyase</keyword>
<keyword id="KW-1185">Reference proteome</keyword>
<comment type="catalytic activity">
    <reaction evidence="1">
        <text>2-(N(omega)-L-arginino)succinate = fumarate + L-arginine</text>
        <dbReference type="Rhea" id="RHEA:24020"/>
        <dbReference type="ChEBI" id="CHEBI:29806"/>
        <dbReference type="ChEBI" id="CHEBI:32682"/>
        <dbReference type="ChEBI" id="CHEBI:57472"/>
        <dbReference type="EC" id="4.3.2.1"/>
    </reaction>
</comment>
<comment type="pathway">
    <text evidence="1">Amino-acid biosynthesis; L-arginine biosynthesis; L-arginine from L-ornithine and carbamoyl phosphate: step 3/3.</text>
</comment>
<comment type="subcellular location">
    <subcellularLocation>
        <location evidence="1">Cytoplasm</location>
    </subcellularLocation>
</comment>
<comment type="similarity">
    <text evidence="1">Belongs to the lyase 1 family. Argininosuccinate lyase subfamily.</text>
</comment>
<organism>
    <name type="scientific">Paracoccus denitrificans (strain Pd 1222)</name>
    <dbReference type="NCBI Taxonomy" id="318586"/>
    <lineage>
        <taxon>Bacteria</taxon>
        <taxon>Pseudomonadati</taxon>
        <taxon>Pseudomonadota</taxon>
        <taxon>Alphaproteobacteria</taxon>
        <taxon>Rhodobacterales</taxon>
        <taxon>Paracoccaceae</taxon>
        <taxon>Paracoccus</taxon>
    </lineage>
</organism>
<dbReference type="EC" id="4.3.2.1" evidence="1"/>
<dbReference type="EMBL" id="CP000489">
    <property type="protein sequence ID" value="ABL70114.1"/>
    <property type="molecule type" value="Genomic_DNA"/>
</dbReference>
<dbReference type="RefSeq" id="WP_011748311.1">
    <property type="nucleotide sequence ID" value="NC_008686.1"/>
</dbReference>
<dbReference type="SMR" id="A1B3M0"/>
<dbReference type="STRING" id="318586.Pden_2022"/>
<dbReference type="EnsemblBacteria" id="ABL70114">
    <property type="protein sequence ID" value="ABL70114"/>
    <property type="gene ID" value="Pden_2022"/>
</dbReference>
<dbReference type="GeneID" id="93450426"/>
<dbReference type="KEGG" id="pde:Pden_2022"/>
<dbReference type="eggNOG" id="COG0165">
    <property type="taxonomic scope" value="Bacteria"/>
</dbReference>
<dbReference type="HOGENOM" id="CLU_027272_2_3_5"/>
<dbReference type="OrthoDB" id="9769623at2"/>
<dbReference type="UniPathway" id="UPA00068">
    <property type="reaction ID" value="UER00114"/>
</dbReference>
<dbReference type="Proteomes" id="UP000000361">
    <property type="component" value="Chromosome 1"/>
</dbReference>
<dbReference type="GO" id="GO:0005829">
    <property type="term" value="C:cytosol"/>
    <property type="evidence" value="ECO:0007669"/>
    <property type="project" value="TreeGrafter"/>
</dbReference>
<dbReference type="GO" id="GO:0004056">
    <property type="term" value="F:argininosuccinate lyase activity"/>
    <property type="evidence" value="ECO:0007669"/>
    <property type="project" value="UniProtKB-UniRule"/>
</dbReference>
<dbReference type="GO" id="GO:0042450">
    <property type="term" value="P:arginine biosynthetic process via ornithine"/>
    <property type="evidence" value="ECO:0007669"/>
    <property type="project" value="InterPro"/>
</dbReference>
<dbReference type="GO" id="GO:0006526">
    <property type="term" value="P:L-arginine biosynthetic process"/>
    <property type="evidence" value="ECO:0007669"/>
    <property type="project" value="UniProtKB-UniRule"/>
</dbReference>
<dbReference type="CDD" id="cd01359">
    <property type="entry name" value="Argininosuccinate_lyase"/>
    <property type="match status" value="1"/>
</dbReference>
<dbReference type="FunFam" id="1.10.275.10:FF:000002">
    <property type="entry name" value="Argininosuccinate lyase"/>
    <property type="match status" value="1"/>
</dbReference>
<dbReference type="FunFam" id="1.10.40.30:FF:000001">
    <property type="entry name" value="Argininosuccinate lyase"/>
    <property type="match status" value="1"/>
</dbReference>
<dbReference type="FunFam" id="1.20.200.10:FF:000015">
    <property type="entry name" value="argininosuccinate lyase isoform X2"/>
    <property type="match status" value="1"/>
</dbReference>
<dbReference type="Gene3D" id="1.10.40.30">
    <property type="entry name" value="Fumarase/aspartase (C-terminal domain)"/>
    <property type="match status" value="1"/>
</dbReference>
<dbReference type="Gene3D" id="1.20.200.10">
    <property type="entry name" value="Fumarase/aspartase (Central domain)"/>
    <property type="match status" value="1"/>
</dbReference>
<dbReference type="Gene3D" id="1.10.275.10">
    <property type="entry name" value="Fumarase/aspartase (N-terminal domain)"/>
    <property type="match status" value="1"/>
</dbReference>
<dbReference type="HAMAP" id="MF_00006">
    <property type="entry name" value="Arg_succ_lyase"/>
    <property type="match status" value="1"/>
</dbReference>
<dbReference type="InterPro" id="IPR029419">
    <property type="entry name" value="Arg_succ_lyase_C"/>
</dbReference>
<dbReference type="InterPro" id="IPR009049">
    <property type="entry name" value="Argininosuccinate_lyase"/>
</dbReference>
<dbReference type="InterPro" id="IPR024083">
    <property type="entry name" value="Fumarase/histidase_N"/>
</dbReference>
<dbReference type="InterPro" id="IPR020557">
    <property type="entry name" value="Fumarate_lyase_CS"/>
</dbReference>
<dbReference type="InterPro" id="IPR000362">
    <property type="entry name" value="Fumarate_lyase_fam"/>
</dbReference>
<dbReference type="InterPro" id="IPR022761">
    <property type="entry name" value="Fumarate_lyase_N"/>
</dbReference>
<dbReference type="InterPro" id="IPR008948">
    <property type="entry name" value="L-Aspartase-like"/>
</dbReference>
<dbReference type="NCBIfam" id="TIGR00838">
    <property type="entry name" value="argH"/>
    <property type="match status" value="1"/>
</dbReference>
<dbReference type="PANTHER" id="PTHR43814">
    <property type="entry name" value="ARGININOSUCCINATE LYASE"/>
    <property type="match status" value="1"/>
</dbReference>
<dbReference type="PANTHER" id="PTHR43814:SF1">
    <property type="entry name" value="ARGININOSUCCINATE LYASE"/>
    <property type="match status" value="1"/>
</dbReference>
<dbReference type="Pfam" id="PF14698">
    <property type="entry name" value="ASL_C2"/>
    <property type="match status" value="1"/>
</dbReference>
<dbReference type="Pfam" id="PF00206">
    <property type="entry name" value="Lyase_1"/>
    <property type="match status" value="1"/>
</dbReference>
<dbReference type="PRINTS" id="PR00145">
    <property type="entry name" value="ARGSUCLYASE"/>
</dbReference>
<dbReference type="PRINTS" id="PR00149">
    <property type="entry name" value="FUMRATELYASE"/>
</dbReference>
<dbReference type="SUPFAM" id="SSF48557">
    <property type="entry name" value="L-aspartase-like"/>
    <property type="match status" value="1"/>
</dbReference>
<dbReference type="PROSITE" id="PS00163">
    <property type="entry name" value="FUMARATE_LYASES"/>
    <property type="match status" value="1"/>
</dbReference>
<accession>A1B3M0</accession>
<name>ARLY_PARDP</name>
<sequence>MTEQPTTANQMWGGRFAAGPDAIMEAINASIGFDQRLYAQDIRGSRAHAAMLAAQGIISTSDAEAIGEGLLTVLSEIEKGDFPFSTALEDIHMNVESRLKEIIGEPAGRLHTARSRNDQVATDFRLWVRDQCDAAIAGLDALIRAALSQAEKGADWVMPGFTHLQTAQPVTWGHHMMAYVEMFGRDLSRFRDARKRMNESPLGAAALAGTGFPIDREATARALGFERPMANSLDAVSDRDFALEYLSSAAICAVHLSRLAEELVIWSSAQFRFVTMSDRFSTGSSIMPQKKNPDAAELIRAKIGRILGAAVALFVVMKGLPLAYSKDMQEDKEQVFDASDNLMLALAAMTGMLTDLTANRERLEAAAGSGFSTATDLADWLVREAGLPFRDAHHATGALVAMAEQAGIDLPDLTLEQMQSVNPAITADVYGVLGVHNSVASRMSYGGTAPAQVRAQIARWKEKLEEKSA</sequence>